<keyword id="KW-0025">Alternative splicing</keyword>
<keyword id="KW-1015">Disulfide bond</keyword>
<keyword id="KW-0372">Hormone</keyword>
<keyword id="KW-1185">Reference proteome</keyword>
<keyword id="KW-0964">Secreted</keyword>
<keyword id="KW-0732">Signal</keyword>
<keyword id="KW-0838">Vasoactive</keyword>
<reference key="1">
    <citation type="journal article" date="1994" name="J. Clin. Invest.">
        <title>Molecular cloning of the complementary DNA and gene that encode mouse brain natriuretic peptide and generation of transgenic mice that overexpress the brain natriuretic peptide gene.</title>
        <authorList>
            <person name="Ogawa Y."/>
            <person name="Itoh H."/>
            <person name="Tamura N."/>
            <person name="Suga S."/>
            <person name="Yoshimasa T."/>
            <person name="Uehira M."/>
            <person name="Matsuda S."/>
            <person name="Shiono S."/>
            <person name="Nishimoto H."/>
            <person name="Nakao K."/>
        </authorList>
    </citation>
    <scope>NUCLEOTIDE SEQUENCE [GENOMIC DNA]</scope>
    <scope>FUNCTION (BRAIN NATRIURETIC PEPTIDE 45)</scope>
    <scope>SUBCELLULAR LOCATION (BRAIN NATRIURETIC PEPTIDE 45)</scope>
    <scope>TISSUE SPECIFICITY (BRAIN NATRIURETIC PEPTIDE 45)</scope>
    <source>
        <strain>BALB/cJ</strain>
        <tissue>Heart</tissue>
    </source>
</reference>
<reference key="2">
    <citation type="journal article" date="1993" name="Circ. Res.">
        <title>Structure, expression, and genomic mapping of the mouse natriuretic peptide type-B gene.</title>
        <authorList>
            <person name="Steinhelper M.E."/>
        </authorList>
    </citation>
    <scope>NUCLEOTIDE SEQUENCE [GENOMIC DNA]</scope>
    <scope>TISSUE SPECIFICITY (BRAIN NATRIURETIC PEPTIDE 45)</scope>
    <source>
        <strain>BALB/cJ</strain>
    </source>
</reference>
<reference key="3">
    <citation type="journal article" date="2004" name="Genome Res.">
        <title>The status, quality, and expansion of the NIH full-length cDNA project: the Mammalian Gene Collection (MGC).</title>
        <authorList>
            <consortium name="The MGC Project Team"/>
        </authorList>
    </citation>
    <scope>NUCLEOTIDE SEQUENCE [LARGE SCALE MRNA] (ISOFORM LONG)</scope>
    <source>
        <tissue>Testis</tissue>
    </source>
</reference>
<reference key="4">
    <citation type="journal article" date="2000" name="Proc. Natl. Acad. Sci. U.S.A.">
        <title>Cardiac fibrosis in mice lacking brain natriuretic peptide.</title>
        <authorList>
            <person name="Tamura N."/>
            <person name="Ogawa Y."/>
            <person name="Chusho H."/>
            <person name="Nakamura K."/>
            <person name="Nakao K."/>
            <person name="Suda M."/>
            <person name="Kasahara M."/>
            <person name="Hashimoto R."/>
            <person name="Katsuura G."/>
            <person name="Mukoyama M."/>
            <person name="Itoh H."/>
            <person name="Saito Y."/>
            <person name="Tanaka I."/>
            <person name="Otani H."/>
            <person name="Katsuki M."/>
        </authorList>
    </citation>
    <scope>FUNCTION (BRAIN NATRIURETIC PEPTIDE 45)</scope>
    <scope>DISRUPTION PHENOTYPE (BRAIN NATRIURETIC PEPTIDE 45)</scope>
</reference>
<name>ANFB_MOUSE</name>
<comment type="function">
    <molecule>Brain natriuretic peptide 45</molecule>
    <text evidence="2 6 7">Cardiac hormone that plays a key role in mediating cardio-renal homeostasis (PubMed:8182124). May also function as a paracrine antifibrotic factor in the heart (PubMed:10737768). Acts by specifically binding and stimulating NPR1 to produce cGMP, which in turn activates effector proteins that drive various biological responses (PubMed:8182124). Likely involved in regulating the extracellular fluid volume and maintaining the fluid-electrolyte balance through natriuresis, diuresis, kaluresis and chloruresis (By similarity).</text>
</comment>
<comment type="subcellular location">
    <molecule>Brain natriuretic peptide 45</molecule>
    <subcellularLocation>
        <location evidence="7">Secreted</location>
    </subcellularLocation>
    <text evidence="7">Detected in blood.</text>
</comment>
<comment type="alternative products">
    <event type="alternative splicing"/>
    <isoform>
        <id>P40753-1</id>
        <name>Long</name>
        <sequence type="displayed"/>
    </isoform>
    <isoform>
        <id>P40753-2</id>
        <name>Short</name>
        <sequence type="described" ref="VSP_000263"/>
    </isoform>
</comment>
<comment type="tissue specificity">
    <molecule>Brain natriuretic peptide 45</molecule>
    <text evidence="7">Expressed abundantly in the ventricle, and in a lesser extent in the atrium (at protein level).</text>
</comment>
<comment type="PTM">
    <text evidence="2 3">The precursor molecule is proteolytically cleaved by the endoprotease Furin to produce brain natriuretic peptide 45 (By similarity). May undergo further proteolytic cleavage by various proteases such as DPP4, MME and possibly FAP, to give rise to a variety of shorter peptides (By similarity). May be cleaved at Ser-91 by the prolyl endopeptidase FAP (seprase) activity (in vitro) (By similarity). May be degraded by IDE (By similarity). During IDE degradation, the resulting products initially increase the activation of NPR1 and can also stimulate NPR2 to produce cGMP before the fragments are completely degraded and inactivated by IDE (in vitro) (By similarity).</text>
</comment>
<comment type="disruption phenotype">
    <molecule>Brain natriuretic peptide 45</molecule>
    <text evidence="6">Mice are viable and fertile and do not display gross skeletal abnormalities. Fluid-electrolyte balance and blood pressure remain normal although an increased rate of focal fibrotic lesions is observed within the cardiac ventricles.</text>
</comment>
<comment type="similarity">
    <text evidence="9">Belongs to the natriuretic peptide family.</text>
</comment>
<dbReference type="EMBL" id="D16497">
    <property type="protein sequence ID" value="BAA03948.1"/>
    <property type="molecule type" value="Genomic_DNA"/>
</dbReference>
<dbReference type="EMBL" id="S58667">
    <property type="protein sequence ID" value="AAB26344.2"/>
    <property type="molecule type" value="Genomic_DNA"/>
</dbReference>
<dbReference type="EMBL" id="BC061165">
    <property type="protein sequence ID" value="AAH61165.1"/>
    <property type="molecule type" value="mRNA"/>
</dbReference>
<dbReference type="CCDS" id="CCDS18926.1">
    <molecule id="P40753-1"/>
</dbReference>
<dbReference type="PIR" id="A49144">
    <property type="entry name" value="A49144"/>
</dbReference>
<dbReference type="PIR" id="I49548">
    <property type="entry name" value="I49548"/>
</dbReference>
<dbReference type="RefSeq" id="NP_001274277.1">
    <molecule id="P40753-2"/>
    <property type="nucleotide sequence ID" value="NM_001287348.2"/>
</dbReference>
<dbReference type="RefSeq" id="NP_032752.1">
    <molecule id="P40753-1"/>
    <property type="nucleotide sequence ID" value="NM_008726.6"/>
</dbReference>
<dbReference type="FunCoup" id="P40753">
    <property type="interactions" value="200"/>
</dbReference>
<dbReference type="STRING" id="10090.ENSMUSP00000099521"/>
<dbReference type="PhosphoSitePlus" id="P40753"/>
<dbReference type="PaxDb" id="10090-ENSMUSP00000099521"/>
<dbReference type="PeptideAtlas" id="P40753"/>
<dbReference type="Antibodypedia" id="13918">
    <property type="antibodies" value="1567 antibodies from 44 providers"/>
</dbReference>
<dbReference type="Ensembl" id="ENSMUST00000103231.5">
    <molecule id="P40753-1"/>
    <property type="protein sequence ID" value="ENSMUSP00000099521.5"/>
    <property type="gene ID" value="ENSMUSG00000029019.9"/>
</dbReference>
<dbReference type="GeneID" id="18158"/>
<dbReference type="KEGG" id="mmu:18158"/>
<dbReference type="UCSC" id="uc008vto.3">
    <molecule id="P40753-1"/>
    <property type="organism name" value="mouse"/>
</dbReference>
<dbReference type="UCSC" id="uc008vtp.3">
    <molecule id="P40753-2"/>
    <property type="organism name" value="mouse"/>
</dbReference>
<dbReference type="AGR" id="MGI:97368"/>
<dbReference type="CTD" id="4879"/>
<dbReference type="MGI" id="MGI:97368">
    <property type="gene designation" value="Nppb"/>
</dbReference>
<dbReference type="VEuPathDB" id="HostDB:ENSMUSG00000029019"/>
<dbReference type="eggNOG" id="ENOG502SD0X">
    <property type="taxonomic scope" value="Eukaryota"/>
</dbReference>
<dbReference type="GeneTree" id="ENSGT00940000154513"/>
<dbReference type="HOGENOM" id="CLU_158067_0_0_1"/>
<dbReference type="InParanoid" id="P40753"/>
<dbReference type="OMA" id="CDGFRRS"/>
<dbReference type="OrthoDB" id="9892281at2759"/>
<dbReference type="PhylomeDB" id="P40753"/>
<dbReference type="TreeFam" id="TF106304"/>
<dbReference type="BioGRID-ORCS" id="18158">
    <property type="hits" value="0 hits in 78 CRISPR screens"/>
</dbReference>
<dbReference type="ChiTaRS" id="Nppb">
    <property type="organism name" value="mouse"/>
</dbReference>
<dbReference type="PRO" id="PR:P40753"/>
<dbReference type="Proteomes" id="UP000000589">
    <property type="component" value="Chromosome 4"/>
</dbReference>
<dbReference type="RNAct" id="P40753">
    <property type="molecule type" value="protein"/>
</dbReference>
<dbReference type="Bgee" id="ENSMUSG00000029019">
    <property type="expression patterns" value="Expressed in cardiac muscle of left ventricle and 33 other cell types or tissues"/>
</dbReference>
<dbReference type="ExpressionAtlas" id="P40753">
    <property type="expression patterns" value="baseline and differential"/>
</dbReference>
<dbReference type="GO" id="GO:0005576">
    <property type="term" value="C:extracellular region"/>
    <property type="evidence" value="ECO:0007669"/>
    <property type="project" value="UniProtKB-SubCell"/>
</dbReference>
<dbReference type="GO" id="GO:0032991">
    <property type="term" value="C:protein-containing complex"/>
    <property type="evidence" value="ECO:0000266"/>
    <property type="project" value="MGI"/>
</dbReference>
<dbReference type="GO" id="GO:0005179">
    <property type="term" value="F:hormone activity"/>
    <property type="evidence" value="ECO:0007669"/>
    <property type="project" value="UniProtKB-KW"/>
</dbReference>
<dbReference type="GO" id="GO:0097746">
    <property type="term" value="P:blood vessel diameter maintenance"/>
    <property type="evidence" value="ECO:0007669"/>
    <property type="project" value="UniProtKB-KW"/>
</dbReference>
<dbReference type="GO" id="GO:0014898">
    <property type="term" value="P:cardiac muscle hypertrophy in response to stress"/>
    <property type="evidence" value="ECO:0000314"/>
    <property type="project" value="MGI"/>
</dbReference>
<dbReference type="GO" id="GO:0006182">
    <property type="term" value="P:cGMP biosynthetic process"/>
    <property type="evidence" value="ECO:0000250"/>
    <property type="project" value="UniProtKB"/>
</dbReference>
<dbReference type="GO" id="GO:0060976">
    <property type="term" value="P:coronary vasculature development"/>
    <property type="evidence" value="ECO:0000314"/>
    <property type="project" value="MGI"/>
</dbReference>
<dbReference type="GO" id="GO:0001935">
    <property type="term" value="P:endothelial cell proliferation"/>
    <property type="evidence" value="ECO:0000314"/>
    <property type="project" value="MGI"/>
</dbReference>
<dbReference type="GO" id="GO:0048872">
    <property type="term" value="P:homeostasis of number of cells"/>
    <property type="evidence" value="ECO:0000314"/>
    <property type="project" value="MGI"/>
</dbReference>
<dbReference type="GO" id="GO:0000165">
    <property type="term" value="P:MAPK cascade"/>
    <property type="evidence" value="ECO:0000314"/>
    <property type="project" value="MGI"/>
</dbReference>
<dbReference type="GO" id="GO:0007168">
    <property type="term" value="P:receptor guanylyl cyclase signaling pathway"/>
    <property type="evidence" value="ECO:0000250"/>
    <property type="project" value="UniProtKB"/>
</dbReference>
<dbReference type="GO" id="GO:0031667">
    <property type="term" value="P:response to nutrient levels"/>
    <property type="evidence" value="ECO:0000314"/>
    <property type="project" value="MGI"/>
</dbReference>
<dbReference type="GO" id="GO:0070482">
    <property type="term" value="P:response to oxygen levels"/>
    <property type="evidence" value="ECO:0000314"/>
    <property type="project" value="MGI"/>
</dbReference>
<dbReference type="InterPro" id="IPR000663">
    <property type="entry name" value="Natr_peptide"/>
</dbReference>
<dbReference type="InterPro" id="IPR030480">
    <property type="entry name" value="Natr_peptide_CS"/>
</dbReference>
<dbReference type="InterPro" id="IPR050787">
    <property type="entry name" value="Natriuretic_peptide"/>
</dbReference>
<dbReference type="InterPro" id="IPR002408">
    <property type="entry name" value="Natriuretic_peptide_brain"/>
</dbReference>
<dbReference type="PANTHER" id="PTHR14066">
    <property type="entry name" value="ATRIAL NATRIURETIC FACTOR PRECURSOR"/>
    <property type="match status" value="1"/>
</dbReference>
<dbReference type="PANTHER" id="PTHR14066:SF10">
    <property type="entry name" value="NATRIURETIC PEPTIDES B"/>
    <property type="match status" value="1"/>
</dbReference>
<dbReference type="Pfam" id="PF00212">
    <property type="entry name" value="ANP"/>
    <property type="match status" value="1"/>
</dbReference>
<dbReference type="PRINTS" id="PR00712">
    <property type="entry name" value="BNATPEPTIDE"/>
</dbReference>
<dbReference type="SMART" id="SM00183">
    <property type="entry name" value="NAT_PEP"/>
    <property type="match status" value="1"/>
</dbReference>
<dbReference type="PROSITE" id="PS00263">
    <property type="entry name" value="NATRIURETIC_PEPTIDE"/>
    <property type="match status" value="1"/>
</dbReference>
<accession>P40753</accession>
<protein>
    <recommendedName>
        <fullName>Natriuretic peptides B</fullName>
    </recommendedName>
    <alternativeName>
        <fullName evidence="3">Brain natriuretic factor prohormone</fullName>
        <shortName evidence="8">preproBNP</shortName>
        <shortName evidence="3">proBNP</shortName>
    </alternativeName>
    <alternativeName>
        <fullName evidence="1">Gamma-brain natriuretic peptide</fullName>
    </alternativeName>
    <alternativeName>
        <fullName evidence="2">Iso-ANP</fullName>
    </alternativeName>
    <component>
        <recommendedName>
            <fullName evidence="8">Brain natriuretic peptide 45</fullName>
        </recommendedName>
        <alternativeName>
            <fullName evidence="2">5 kDa cardiac natriuretic peptide</fullName>
        </alternativeName>
        <alternativeName>
            <fullName evidence="8">BNP(77-121)</fullName>
        </alternativeName>
        <alternativeName>
            <fullName evidence="2">Brain natriuretic peptide</fullName>
            <shortName evidence="2">BNP</shortName>
        </alternativeName>
    </component>
</protein>
<sequence>MDLLKVLSQMILFLLFLYLSPLGGHSYPLGSPSQSPEQFKMQKLLELIREKSEEMAQRQLLKDQGLTKEHPKRVLRSQGSTLRVQQRPQNSKVTHISSCFGHKIDRIGSVSRLGCNALKLL</sequence>
<organism>
    <name type="scientific">Mus musculus</name>
    <name type="common">Mouse</name>
    <dbReference type="NCBI Taxonomy" id="10090"/>
    <lineage>
        <taxon>Eukaryota</taxon>
        <taxon>Metazoa</taxon>
        <taxon>Chordata</taxon>
        <taxon>Craniata</taxon>
        <taxon>Vertebrata</taxon>
        <taxon>Euteleostomi</taxon>
        <taxon>Mammalia</taxon>
        <taxon>Eutheria</taxon>
        <taxon>Euarchontoglires</taxon>
        <taxon>Glires</taxon>
        <taxon>Rodentia</taxon>
        <taxon>Myomorpha</taxon>
        <taxon>Muroidea</taxon>
        <taxon>Muridae</taxon>
        <taxon>Murinae</taxon>
        <taxon>Mus</taxon>
        <taxon>Mus</taxon>
    </lineage>
</organism>
<feature type="signal peptide" evidence="4">
    <location>
        <begin position="1"/>
        <end position="26"/>
    </location>
</feature>
<feature type="peptide" id="PRO_0000001533" description="Natriuretic peptides B">
    <location>
        <begin position="27"/>
        <end position="121"/>
    </location>
</feature>
<feature type="peptide" id="PRO_0000001534" description="Brain natriuretic peptide 45">
    <location>
        <begin position="77"/>
        <end position="121"/>
    </location>
</feature>
<feature type="region of interest" description="Disordered" evidence="5">
    <location>
        <begin position="61"/>
        <end position="89"/>
    </location>
</feature>
<feature type="compositionally biased region" description="Polar residues" evidence="5">
    <location>
        <begin position="77"/>
        <end position="89"/>
    </location>
</feature>
<feature type="site" description="Cleavage; by FURIN" evidence="2">
    <location>
        <begin position="76"/>
        <end position="77"/>
    </location>
</feature>
<feature type="site" description="Cleavage; by FAP" evidence="3">
    <location>
        <begin position="91"/>
        <end position="92"/>
    </location>
</feature>
<feature type="disulfide bond" evidence="3">
    <location>
        <begin position="99"/>
        <end position="115"/>
    </location>
</feature>
<feature type="splice variant" id="VSP_000263" description="In isoform Short." evidence="9">
    <location>
        <position position="43"/>
    </location>
</feature>
<feature type="sequence conflict" description="In Ref. 2; AAB26344." evidence="9" ref="2">
    <original>Y</original>
    <variation>H</variation>
    <location>
        <position position="27"/>
    </location>
</feature>
<feature type="sequence conflict" description="In Ref. 2; AAB26344." evidence="9" ref="2">
    <original>P</original>
    <variation>L</variation>
    <location>
        <position position="71"/>
    </location>
</feature>
<gene>
    <name type="primary">Nppb</name>
</gene>
<evidence type="ECO:0000250" key="1">
    <source>
        <dbReference type="UniProtKB" id="P07634"/>
    </source>
</evidence>
<evidence type="ECO:0000250" key="2">
    <source>
        <dbReference type="UniProtKB" id="P13205"/>
    </source>
</evidence>
<evidence type="ECO:0000250" key="3">
    <source>
        <dbReference type="UniProtKB" id="P16860"/>
    </source>
</evidence>
<evidence type="ECO:0000255" key="4"/>
<evidence type="ECO:0000256" key="5">
    <source>
        <dbReference type="SAM" id="MobiDB-lite"/>
    </source>
</evidence>
<evidence type="ECO:0000269" key="6">
    <source>
    </source>
</evidence>
<evidence type="ECO:0000269" key="7">
    <source>
    </source>
</evidence>
<evidence type="ECO:0000303" key="8">
    <source>
    </source>
</evidence>
<evidence type="ECO:0000305" key="9"/>
<proteinExistence type="evidence at protein level"/>